<feature type="signal peptide" evidence="1">
    <location>
        <begin position="1"/>
        <end position="20"/>
    </location>
</feature>
<feature type="chain" id="PRO_0000248555" description="Excretory canal abnormal exc-13">
    <location>
        <begin position="21"/>
        <end position="203"/>
    </location>
</feature>
<feature type="glycosylation site" description="N-linked (GlcNAc...) asparagine" evidence="4">
    <location>
        <position position="32"/>
    </location>
</feature>
<feature type="glycosylation site" description="N-linked (GlcNAc...) asparagine" evidence="2 3 4">
    <location>
        <position position="84"/>
    </location>
</feature>
<feature type="glycosylation site" description="N-linked (GlcNAc...) asparagine" evidence="1">
    <location>
        <position position="188"/>
    </location>
</feature>
<organism>
    <name type="scientific">Caenorhabditis elegans</name>
    <dbReference type="NCBI Taxonomy" id="6239"/>
    <lineage>
        <taxon>Eukaryota</taxon>
        <taxon>Metazoa</taxon>
        <taxon>Ecdysozoa</taxon>
        <taxon>Nematoda</taxon>
        <taxon>Chromadorea</taxon>
        <taxon>Rhabditida</taxon>
        <taxon>Rhabditina</taxon>
        <taxon>Rhabditomorpha</taxon>
        <taxon>Rhabditoidea</taxon>
        <taxon>Rhabditidae</taxon>
        <taxon>Peloderinae</taxon>
        <taxon>Caenorhabditis</taxon>
    </lineage>
</organism>
<gene>
    <name evidence="6" type="primary">exc-13</name>
    <name evidence="6" type="ORF">C03G6.5</name>
</gene>
<protein>
    <recommendedName>
        <fullName evidence="6">Excretory canal abnormal exc-13</fullName>
    </recommendedName>
    <alternativeName>
        <fullName>UPF0376 protein C03G6.5</fullName>
    </alternativeName>
</protein>
<proteinExistence type="evidence at protein level"/>
<accession>O01454</accession>
<name>U376A_CAEEL</name>
<dbReference type="EMBL" id="FO080297">
    <property type="protein sequence ID" value="CCD62706.1"/>
    <property type="molecule type" value="Genomic_DNA"/>
</dbReference>
<dbReference type="RefSeq" id="NP_504881.3">
    <property type="nucleotide sequence ID" value="NM_072480.6"/>
</dbReference>
<dbReference type="FunCoup" id="O01454">
    <property type="interactions" value="163"/>
</dbReference>
<dbReference type="STRING" id="6239.C03G6.5.1"/>
<dbReference type="iPTMnet" id="O01454"/>
<dbReference type="PaxDb" id="6239-C03G6.5"/>
<dbReference type="PeptideAtlas" id="O01454"/>
<dbReference type="EnsemblMetazoa" id="C03G6.5.1">
    <property type="protein sequence ID" value="C03G6.5.1"/>
    <property type="gene ID" value="WBGene00015393"/>
</dbReference>
<dbReference type="GeneID" id="179123"/>
<dbReference type="KEGG" id="cel:CELE_C03G6.5"/>
<dbReference type="UCSC" id="C03G6.5">
    <property type="organism name" value="c. elegans"/>
</dbReference>
<dbReference type="AGR" id="WB:WBGene00015393"/>
<dbReference type="CTD" id="179123"/>
<dbReference type="WormBase" id="C03G6.5">
    <property type="protein sequence ID" value="CE45476"/>
    <property type="gene ID" value="WBGene00015393"/>
    <property type="gene designation" value="exc-13"/>
</dbReference>
<dbReference type="eggNOG" id="ENOG502THJ5">
    <property type="taxonomic scope" value="Eukaryota"/>
</dbReference>
<dbReference type="GeneTree" id="ENSGT00970000195826"/>
<dbReference type="HOGENOM" id="CLU_078890_1_0_1"/>
<dbReference type="InParanoid" id="O01454"/>
<dbReference type="OrthoDB" id="5804752at2759"/>
<dbReference type="PhylomeDB" id="O01454"/>
<dbReference type="PRO" id="PR:O01454"/>
<dbReference type="Proteomes" id="UP000001940">
    <property type="component" value="Chromosome V"/>
</dbReference>
<dbReference type="Bgee" id="WBGene00015393">
    <property type="expression patterns" value="Expressed in larva and 2 other cell types or tissues"/>
</dbReference>
<dbReference type="GO" id="GO:0005576">
    <property type="term" value="C:extracellular region"/>
    <property type="evidence" value="ECO:0007669"/>
    <property type="project" value="UniProtKB-SubCell"/>
</dbReference>
<dbReference type="InterPro" id="IPR002542">
    <property type="entry name" value="T20D4.11-like_dom"/>
</dbReference>
<dbReference type="InterPro" id="IPR016638">
    <property type="entry name" value="UPF0376"/>
</dbReference>
<dbReference type="PANTHER" id="PTHR21453:SF28">
    <property type="entry name" value="DUF19 DOMAIN-CONTAINING PROTEIN-RELATED"/>
    <property type="match status" value="1"/>
</dbReference>
<dbReference type="PANTHER" id="PTHR21453">
    <property type="entry name" value="DUF19 DOMAIN-CONTAINING PROTEIN-RELATED-RELATED"/>
    <property type="match status" value="1"/>
</dbReference>
<dbReference type="Pfam" id="PF01579">
    <property type="entry name" value="DUF19"/>
    <property type="match status" value="1"/>
</dbReference>
<dbReference type="PIRSF" id="PIRSF015697">
    <property type="entry name" value="UCP015697"/>
    <property type="match status" value="1"/>
</dbReference>
<reference key="1">
    <citation type="journal article" date="1998" name="Science">
        <title>Genome sequence of the nematode C. elegans: a platform for investigating biology.</title>
        <authorList>
            <consortium name="The C. elegans sequencing consortium"/>
        </authorList>
    </citation>
    <scope>NUCLEOTIDE SEQUENCE [LARGE SCALE GENOMIC DNA]</scope>
    <source>
        <strain>Bristol N2</strain>
    </source>
</reference>
<reference key="2">
    <citation type="journal article" date="2003" name="Nat. Biotechnol.">
        <title>Lectin affinity capture, isotope-coded tagging and mass spectrometry to identify N-linked glycoproteins.</title>
        <authorList>
            <person name="Kaji H."/>
            <person name="Saito H."/>
            <person name="Yamauchi Y."/>
            <person name="Shinkawa T."/>
            <person name="Taoka M."/>
            <person name="Hirabayashi J."/>
            <person name="Kasai K."/>
            <person name="Takahashi N."/>
            <person name="Isobe T."/>
        </authorList>
    </citation>
    <scope>GLYCOSYLATION [LARGE SCALE ANALYSIS] AT ASN-84</scope>
    <scope>IDENTIFICATION BY MASS SPECTROMETRY</scope>
    <source>
        <strain>Bristol N2</strain>
    </source>
</reference>
<reference key="3">
    <citation type="journal article" date="2005" name="Glycobiology">
        <title>Identification of the hydrophobic glycoproteins of Caenorhabditis elegans.</title>
        <authorList>
            <person name="Fan X."/>
            <person name="She Y.-M."/>
            <person name="Bagshaw R.D."/>
            <person name="Callahan J.W."/>
            <person name="Schachter H."/>
            <person name="Mahuran D.J."/>
        </authorList>
    </citation>
    <scope>GLYCOSYLATION [LARGE SCALE ANALYSIS] AT ASN-84</scope>
    <scope>IDENTIFICATION BY MASS SPECTROMETRY</scope>
</reference>
<reference key="4">
    <citation type="journal article" date="2007" name="Mol. Cell. Proteomics">
        <title>Proteomics reveals N-linked glycoprotein diversity in Caenorhabditis elegans and suggests an atypical translocation mechanism for integral membrane proteins.</title>
        <authorList>
            <person name="Kaji H."/>
            <person name="Kamiie J."/>
            <person name="Kawakami H."/>
            <person name="Kido K."/>
            <person name="Yamauchi Y."/>
            <person name="Shinkawa T."/>
            <person name="Taoka M."/>
            <person name="Takahashi N."/>
            <person name="Isobe T."/>
        </authorList>
    </citation>
    <scope>GLYCOSYLATION [LARGE SCALE ANALYSIS] AT ASN-32 AND ASN-84</scope>
    <scope>IDENTIFICATION BY MASS SPECTROMETRY</scope>
    <source>
        <strain>Bristol N2</strain>
    </source>
</reference>
<comment type="subcellular location">
    <subcellularLocation>
        <location evidence="5">Secreted</location>
    </subcellularLocation>
</comment>
<comment type="similarity">
    <text evidence="5">Belongs to the UPF0376 family.</text>
</comment>
<evidence type="ECO:0000255" key="1"/>
<evidence type="ECO:0000269" key="2">
    <source>
    </source>
</evidence>
<evidence type="ECO:0000269" key="3">
    <source>
    </source>
</evidence>
<evidence type="ECO:0000269" key="4">
    <source>
    </source>
</evidence>
<evidence type="ECO:0000305" key="5"/>
<evidence type="ECO:0000312" key="6">
    <source>
        <dbReference type="WormBase" id="C03G6.5"/>
    </source>
</evidence>
<keyword id="KW-0325">Glycoprotein</keyword>
<keyword id="KW-1185">Reference proteome</keyword>
<keyword id="KW-0964">Secreted</keyword>
<keyword id="KW-0732">Signal</keyword>
<sequence length="203" mass="22819">MIGFLKFALIGTVLLGVANGASVATASAKGSNCTVQDGYAALMCLVRLSDFAEKVDNLDMNDKTKLKEFKRSCDSLHSCYSNLNCTTKSDDEKDKYVESIKQYCDAVVYVSDGFSKCSDKLNEKKSKCFDDWDPIPNKIHLEEDEAKIEKIKNEACKTYFGKDDCMKKEITETCGKEEWDSFRKQFVNLSGGLVSKCDFSRFE</sequence>